<comment type="subunit">
    <text evidence="4 5">Component of the super elongation complex (SEC), at least composed of EAF1, EAF2, CDK9, MLLT3/AF9, AFF (AFF1 or AFF4), the P-TEFb complex and ELL (ELL, ELL2 or ELL3).</text>
</comment>
<comment type="interaction">
    <interactant intactId="EBI-2610180">
        <id>P51825</id>
    </interactant>
    <interactant intactId="EBI-716132">
        <id>P42568</id>
        <label>MLLT3</label>
    </interactant>
    <organismsDiffer>false</organismsDiffer>
    <experiments>7</experiments>
</comment>
<comment type="interaction">
    <interactant intactId="EBI-2610180">
        <id>P51825</id>
    </interactant>
    <interactant intactId="EBI-6164389">
        <id>P04608</id>
        <label>tat</label>
    </interactant>
    <organismsDiffer>true</organismsDiffer>
    <experiments>3</experiments>
</comment>
<comment type="interaction">
    <interactant intactId="EBI-24213872">
        <id>P51825-3</id>
    </interactant>
    <interactant intactId="EBI-2808808">
        <id>P53367</id>
        <label>ARFIP1</label>
    </interactant>
    <organismsDiffer>false</organismsDiffer>
    <experiments>3</experiments>
</comment>
<comment type="subcellular location">
    <subcellularLocation>
        <location evidence="8">Nucleus</location>
    </subcellularLocation>
</comment>
<comment type="alternative products">
    <event type="alternative splicing"/>
    <isoform>
        <id>P51825-1</id>
        <name>1</name>
        <sequence type="displayed"/>
    </isoform>
    <isoform>
        <id>P51825-2</id>
        <name>2</name>
        <sequence type="described" ref="VSP_046095 VSP_046096"/>
    </isoform>
    <isoform>
        <id>P51825-3</id>
        <name>3</name>
        <sequence type="described" ref="VSP_046096"/>
    </isoform>
</comment>
<comment type="disease">
    <text>A chromosomal aberration involving AFF1 is associated with acute leukemias. Translocation t(4;11)(q21;q23) with KMT2A/MLL1. The result is a rogue activator protein.</text>
</comment>
<comment type="similarity">
    <text evidence="8">Belongs to the AF4 family.</text>
</comment>
<comment type="sequence caution" evidence="8">
    <conflict type="frameshift">
        <sequence resource="EMBL-CDS" id="AAA36642"/>
    </conflict>
</comment>
<comment type="online information" name="Atlas of Genetics and Cytogenetics in Oncology and Haematology">
    <link uri="https://atlasgeneticsoncology.org/gene/3/AF4"/>
</comment>
<evidence type="ECO:0000250" key="1">
    <source>
        <dbReference type="UniProtKB" id="O88573"/>
    </source>
</evidence>
<evidence type="ECO:0000256" key="2">
    <source>
        <dbReference type="SAM" id="MobiDB-lite"/>
    </source>
</evidence>
<evidence type="ECO:0000269" key="3">
    <source>
    </source>
</evidence>
<evidence type="ECO:0000269" key="4">
    <source>
    </source>
</evidence>
<evidence type="ECO:0000269" key="5">
    <source>
    </source>
</evidence>
<evidence type="ECO:0000303" key="6">
    <source>
    </source>
</evidence>
<evidence type="ECO:0000303" key="7">
    <source>
    </source>
</evidence>
<evidence type="ECO:0000305" key="8"/>
<evidence type="ECO:0007744" key="9">
    <source>
    </source>
</evidence>
<evidence type="ECO:0007744" key="10">
    <source>
    </source>
</evidence>
<evidence type="ECO:0007744" key="11">
    <source>
    </source>
</evidence>
<evidence type="ECO:0007744" key="12">
    <source>
    </source>
</evidence>
<evidence type="ECO:0007744" key="13">
    <source>
    </source>
</evidence>
<evidence type="ECO:0007744" key="14">
    <source>
    </source>
</evidence>
<evidence type="ECO:0007744" key="15">
    <source>
    </source>
</evidence>
<evidence type="ECO:0007744" key="16">
    <source>
    </source>
</evidence>
<evidence type="ECO:0007829" key="17">
    <source>
        <dbReference type="PDB" id="2LM0"/>
    </source>
</evidence>
<sequence length="1210" mass="131422">MAAQSSLYNDDRNLLRIREKERRNQEAHQEKEAFPEKIPLFGEPYKTAKGDELSSRIQNMLGNYEEVKEFLSTKSHTHRLDASENRLGKPKYPLIPDKGSSIPSSSFHTSVHHQSIHTPASGPLSVGNISHNPKMAQPRTEPMPSLHAKSCGPPDSQHLTQDRLGQEGFGSSHHKKGDRRADGDHCASVTDSAPERELSPLISLPSPVPPLSPIHSNQQTLPRTQGSSKVHGSSNNSKGYCPAKSPKDLAVKVHDKETPQDSLVAPAQPPSQTFPPPSLPSKSVAMQQKPTAYVRPMDGQDQAPSESPELKPLPEDYRQQTFEKTDLKVPAKAKLTKLKMPSQSVEQTYSNEVHCVEEILKEMTHSWPPPLTAIHTPSTAEPSKFPFPTKDSQHVSSVTQNQKQYDTSSKTHSNSQQGTSSMLEDDLQLSDSEDSDSEQTPEKPPSSSAPPSAPQSLPEPVASAHSSSAESESTSDSDSSSDSESESSSSDSEENEPLETPAPEPEPPTTNKWQLDNWLTKVSQPAAPPEGPRSTEPPRRHPESKGSSDSATSQEHSESKDPPPKSSSKAPRAPPEAPHPGKRSCQKSPAQQEPPQRQTVGTKQPKKPVKASARAGSRTSLQGEREPGLLPYGSRDQTSKDKPKVKTKGRPRAAASNEPKPAVPPSSEKKKHKSSLPAPSKALSGPEPAKDNVEDRTPEHFALVPLTESQGPPHSGSGSRTSGCRQAVVVQEDSRKDRLPLPLRDTKLLSPLRDTPPPQSLMVKITLDLLSRIPQPPGKGSRQRKAEDKQPPAGKKHSSEKRSSDSSSKLAKKRKGEAERDCDNKKIRLEKEIKSQSSSSSSSHKESSKTKPSRPSSQSSKKEMLPPPPVSSSSQKPAKPALKRSRREADTCGQDPPKSASSTKSNHKDSSIPKQRRVEGKGSRSSSEHKGSSGDTANPFPVPSLPNGNSKPGKPQVKFDKQQADLHMREAKKMKQKAELMTDRVGKAFKYLEAVLSFIECGIATESESQSSKSAYSVYSETVDLIKFIMSLKSFSDATAPTQEKIFAVLCMRCQSILNMAMFRCKKDIAIKYSRTLNKHFESSSKVAQAPSPCIASTGTPSPLSPMPSPASSVGSQSSAGSVGSSGVAATISTPVTIQNMTSSYVTITSHVLTAFDLWEQAEALTRKNKEFFARLSTNVCTLALNSSLVDLVHYTRQGFQQLQELTKTP</sequence>
<proteinExistence type="evidence at protein level"/>
<name>AFF1_HUMAN</name>
<reference key="1">
    <citation type="journal article" date="1993" name="Proc. Natl. Acad. Sci. U.S.A.">
        <title>Genes on chromosomes 4, 9, and 19 involved in 11q23 abnormalities in acute leukemia share sequence homology and/or common motifs.</title>
        <authorList>
            <person name="Nakamura T."/>
            <person name="Alder H."/>
            <person name="Gu Y."/>
            <person name="Prasad R."/>
            <person name="Canaani O."/>
            <person name="Kamada N."/>
            <person name="Gale R.P."/>
            <person name="Lange B."/>
            <person name="Crist W.M."/>
            <person name="Nowell P.C."/>
            <person name="Croce C.M."/>
            <person name="Canaani E."/>
        </authorList>
    </citation>
    <scope>NUCLEOTIDE SEQUENCE [MRNA] (ISOFORM 1)</scope>
</reference>
<reference key="2">
    <citation type="journal article" date="1993" name="Blood">
        <title>A serine/proline-rich protein is fused to HRX in t(4;11) acute leukemias.</title>
        <authorList>
            <person name="Morrissey J."/>
            <person name="Tkachuk D.C."/>
            <person name="Milatovich A."/>
            <person name="Francke U."/>
            <person name="Link M."/>
            <person name="Cleary M.L."/>
        </authorList>
    </citation>
    <scope>NUCLEOTIDE SEQUENCE [MRNA] (ISOFORM 3)</scope>
    <scope>CHROMOSOMAL TRANSLOCATION WITH KMT2A</scope>
</reference>
<reference key="3">
    <citation type="journal article" date="2004" name="Nat. Genet.">
        <title>Complete sequencing and characterization of 21,243 full-length human cDNAs.</title>
        <authorList>
            <person name="Ota T."/>
            <person name="Suzuki Y."/>
            <person name="Nishikawa T."/>
            <person name="Otsuki T."/>
            <person name="Sugiyama T."/>
            <person name="Irie R."/>
            <person name="Wakamatsu A."/>
            <person name="Hayashi K."/>
            <person name="Sato H."/>
            <person name="Nagai K."/>
            <person name="Kimura K."/>
            <person name="Makita H."/>
            <person name="Sekine M."/>
            <person name="Obayashi M."/>
            <person name="Nishi T."/>
            <person name="Shibahara T."/>
            <person name="Tanaka T."/>
            <person name="Ishii S."/>
            <person name="Yamamoto J."/>
            <person name="Saito K."/>
            <person name="Kawai Y."/>
            <person name="Isono Y."/>
            <person name="Nakamura Y."/>
            <person name="Nagahari K."/>
            <person name="Murakami K."/>
            <person name="Yasuda T."/>
            <person name="Iwayanagi T."/>
            <person name="Wagatsuma M."/>
            <person name="Shiratori A."/>
            <person name="Sudo H."/>
            <person name="Hosoiri T."/>
            <person name="Kaku Y."/>
            <person name="Kodaira H."/>
            <person name="Kondo H."/>
            <person name="Sugawara M."/>
            <person name="Takahashi M."/>
            <person name="Kanda K."/>
            <person name="Yokoi T."/>
            <person name="Furuya T."/>
            <person name="Kikkawa E."/>
            <person name="Omura Y."/>
            <person name="Abe K."/>
            <person name="Kamihara K."/>
            <person name="Katsuta N."/>
            <person name="Sato K."/>
            <person name="Tanikawa M."/>
            <person name="Yamazaki M."/>
            <person name="Ninomiya K."/>
            <person name="Ishibashi T."/>
            <person name="Yamashita H."/>
            <person name="Murakawa K."/>
            <person name="Fujimori K."/>
            <person name="Tanai H."/>
            <person name="Kimata M."/>
            <person name="Watanabe M."/>
            <person name="Hiraoka S."/>
            <person name="Chiba Y."/>
            <person name="Ishida S."/>
            <person name="Ono Y."/>
            <person name="Takiguchi S."/>
            <person name="Watanabe S."/>
            <person name="Yosida M."/>
            <person name="Hotuta T."/>
            <person name="Kusano J."/>
            <person name="Kanehori K."/>
            <person name="Takahashi-Fujii A."/>
            <person name="Hara H."/>
            <person name="Tanase T.-O."/>
            <person name="Nomura Y."/>
            <person name="Togiya S."/>
            <person name="Komai F."/>
            <person name="Hara R."/>
            <person name="Takeuchi K."/>
            <person name="Arita M."/>
            <person name="Imose N."/>
            <person name="Musashino K."/>
            <person name="Yuuki H."/>
            <person name="Oshima A."/>
            <person name="Sasaki N."/>
            <person name="Aotsuka S."/>
            <person name="Yoshikawa Y."/>
            <person name="Matsunawa H."/>
            <person name="Ichihara T."/>
            <person name="Shiohata N."/>
            <person name="Sano S."/>
            <person name="Moriya S."/>
            <person name="Momiyama H."/>
            <person name="Satoh N."/>
            <person name="Takami S."/>
            <person name="Terashima Y."/>
            <person name="Suzuki O."/>
            <person name="Nakagawa S."/>
            <person name="Senoh A."/>
            <person name="Mizoguchi H."/>
            <person name="Goto Y."/>
            <person name="Shimizu F."/>
            <person name="Wakebe H."/>
            <person name="Hishigaki H."/>
            <person name="Watanabe T."/>
            <person name="Sugiyama A."/>
            <person name="Takemoto M."/>
            <person name="Kawakami B."/>
            <person name="Yamazaki M."/>
            <person name="Watanabe K."/>
            <person name="Kumagai A."/>
            <person name="Itakura S."/>
            <person name="Fukuzumi Y."/>
            <person name="Fujimori Y."/>
            <person name="Komiyama M."/>
            <person name="Tashiro H."/>
            <person name="Tanigami A."/>
            <person name="Fujiwara T."/>
            <person name="Ono T."/>
            <person name="Yamada K."/>
            <person name="Fujii Y."/>
            <person name="Ozaki K."/>
            <person name="Hirao M."/>
            <person name="Ohmori Y."/>
            <person name="Kawabata A."/>
            <person name="Hikiji T."/>
            <person name="Kobatake N."/>
            <person name="Inagaki H."/>
            <person name="Ikema Y."/>
            <person name="Okamoto S."/>
            <person name="Okitani R."/>
            <person name="Kawakami T."/>
            <person name="Noguchi S."/>
            <person name="Itoh T."/>
            <person name="Shigeta K."/>
            <person name="Senba T."/>
            <person name="Matsumura K."/>
            <person name="Nakajima Y."/>
            <person name="Mizuno T."/>
            <person name="Morinaga M."/>
            <person name="Sasaki M."/>
            <person name="Togashi T."/>
            <person name="Oyama M."/>
            <person name="Hata H."/>
            <person name="Watanabe M."/>
            <person name="Komatsu T."/>
            <person name="Mizushima-Sugano J."/>
            <person name="Satoh T."/>
            <person name="Shirai Y."/>
            <person name="Takahashi Y."/>
            <person name="Nakagawa K."/>
            <person name="Okumura K."/>
            <person name="Nagase T."/>
            <person name="Nomura N."/>
            <person name="Kikuchi H."/>
            <person name="Masuho Y."/>
            <person name="Yamashita R."/>
            <person name="Nakai K."/>
            <person name="Yada T."/>
            <person name="Nakamura Y."/>
            <person name="Ohara O."/>
            <person name="Isogai T."/>
            <person name="Sugano S."/>
        </authorList>
    </citation>
    <scope>NUCLEOTIDE SEQUENCE [LARGE SCALE MRNA] (ISOFORM 2)</scope>
    <source>
        <tissue>Placenta</tissue>
    </source>
</reference>
<reference key="4">
    <citation type="journal article" date="2005" name="Nature">
        <title>Generation and annotation of the DNA sequences of human chromosomes 2 and 4.</title>
        <authorList>
            <person name="Hillier L.W."/>
            <person name="Graves T.A."/>
            <person name="Fulton R.S."/>
            <person name="Fulton L.A."/>
            <person name="Pepin K.H."/>
            <person name="Minx P."/>
            <person name="Wagner-McPherson C."/>
            <person name="Layman D."/>
            <person name="Wylie K."/>
            <person name="Sekhon M."/>
            <person name="Becker M.C."/>
            <person name="Fewell G.A."/>
            <person name="Delehaunty K.D."/>
            <person name="Miner T.L."/>
            <person name="Nash W.E."/>
            <person name="Kremitzki C."/>
            <person name="Oddy L."/>
            <person name="Du H."/>
            <person name="Sun H."/>
            <person name="Bradshaw-Cordum H."/>
            <person name="Ali J."/>
            <person name="Carter J."/>
            <person name="Cordes M."/>
            <person name="Harris A."/>
            <person name="Isak A."/>
            <person name="van Brunt A."/>
            <person name="Nguyen C."/>
            <person name="Du F."/>
            <person name="Courtney L."/>
            <person name="Kalicki J."/>
            <person name="Ozersky P."/>
            <person name="Abbott S."/>
            <person name="Armstrong J."/>
            <person name="Belter E.A."/>
            <person name="Caruso L."/>
            <person name="Cedroni M."/>
            <person name="Cotton M."/>
            <person name="Davidson T."/>
            <person name="Desai A."/>
            <person name="Elliott G."/>
            <person name="Erb T."/>
            <person name="Fronick C."/>
            <person name="Gaige T."/>
            <person name="Haakenson W."/>
            <person name="Haglund K."/>
            <person name="Holmes A."/>
            <person name="Harkins R."/>
            <person name="Kim K."/>
            <person name="Kruchowski S.S."/>
            <person name="Strong C.M."/>
            <person name="Grewal N."/>
            <person name="Goyea E."/>
            <person name="Hou S."/>
            <person name="Levy A."/>
            <person name="Martinka S."/>
            <person name="Mead K."/>
            <person name="McLellan M.D."/>
            <person name="Meyer R."/>
            <person name="Randall-Maher J."/>
            <person name="Tomlinson C."/>
            <person name="Dauphin-Kohlberg S."/>
            <person name="Kozlowicz-Reilly A."/>
            <person name="Shah N."/>
            <person name="Swearengen-Shahid S."/>
            <person name="Snider J."/>
            <person name="Strong J.T."/>
            <person name="Thompson J."/>
            <person name="Yoakum M."/>
            <person name="Leonard S."/>
            <person name="Pearman C."/>
            <person name="Trani L."/>
            <person name="Radionenko M."/>
            <person name="Waligorski J.E."/>
            <person name="Wang C."/>
            <person name="Rock S.M."/>
            <person name="Tin-Wollam A.-M."/>
            <person name="Maupin R."/>
            <person name="Latreille P."/>
            <person name="Wendl M.C."/>
            <person name="Yang S.-P."/>
            <person name="Pohl C."/>
            <person name="Wallis J.W."/>
            <person name="Spieth J."/>
            <person name="Bieri T.A."/>
            <person name="Berkowicz N."/>
            <person name="Nelson J.O."/>
            <person name="Osborne J."/>
            <person name="Ding L."/>
            <person name="Meyer R."/>
            <person name="Sabo A."/>
            <person name="Shotland Y."/>
            <person name="Sinha P."/>
            <person name="Wohldmann P.E."/>
            <person name="Cook L.L."/>
            <person name="Hickenbotham M.T."/>
            <person name="Eldred J."/>
            <person name="Williams D."/>
            <person name="Jones T.A."/>
            <person name="She X."/>
            <person name="Ciccarelli F.D."/>
            <person name="Izaurralde E."/>
            <person name="Taylor J."/>
            <person name="Schmutz J."/>
            <person name="Myers R.M."/>
            <person name="Cox D.R."/>
            <person name="Huang X."/>
            <person name="McPherson J.D."/>
            <person name="Mardis E.R."/>
            <person name="Clifton S.W."/>
            <person name="Warren W.C."/>
            <person name="Chinwalla A.T."/>
            <person name="Eddy S.R."/>
            <person name="Marra M.A."/>
            <person name="Ovcharenko I."/>
            <person name="Furey T.S."/>
            <person name="Miller W."/>
            <person name="Eichler E.E."/>
            <person name="Bork P."/>
            <person name="Suyama M."/>
            <person name="Torrents D."/>
            <person name="Waterston R.H."/>
            <person name="Wilson R.K."/>
        </authorList>
    </citation>
    <scope>NUCLEOTIDE SEQUENCE [LARGE SCALE GENOMIC DNA]</scope>
</reference>
<reference key="5">
    <citation type="journal article" date="1992" name="Cell">
        <title>The t(4;11) chromosome translocation of human acute leukemias fuses the ALL-1 gene, related to Drosophila trithorax, to the AF-4 gene.</title>
        <authorList>
            <person name="Gu Y."/>
            <person name="Nakamura T."/>
            <person name="Alder H."/>
            <person name="Prasad R."/>
            <person name="Canaani O."/>
            <person name="Cimino G."/>
            <person name="Croce C.M."/>
            <person name="Canaani E."/>
        </authorList>
    </citation>
    <scope>CHROMOSOMAL TRANSLOCATION WITH KMT2A</scope>
</reference>
<reference key="6">
    <citation type="journal article" date="2008" name="Mol. Cell">
        <title>Kinase-selective enrichment enables quantitative phosphoproteomics of the kinome across the cell cycle.</title>
        <authorList>
            <person name="Daub H."/>
            <person name="Olsen J.V."/>
            <person name="Bairlein M."/>
            <person name="Gnad F."/>
            <person name="Oppermann F.S."/>
            <person name="Korner R."/>
            <person name="Greff Z."/>
            <person name="Keri G."/>
            <person name="Stemmann O."/>
            <person name="Mann M."/>
        </authorList>
    </citation>
    <scope>PHOSPHORYLATION [LARGE SCALE ANALYSIS] AT SER-206; SER-212 AND THR-697</scope>
    <scope>IDENTIFICATION BY MASS SPECTROMETRY [LARGE SCALE ANALYSIS]</scope>
    <source>
        <tissue>Cervix carcinoma</tissue>
    </source>
</reference>
<reference key="7">
    <citation type="journal article" date="2008" name="Proc. Natl. Acad. Sci. U.S.A.">
        <title>A quantitative atlas of mitotic phosphorylation.</title>
        <authorList>
            <person name="Dephoure N."/>
            <person name="Zhou C."/>
            <person name="Villen J."/>
            <person name="Beausoleil S.A."/>
            <person name="Bakalarski C.E."/>
            <person name="Elledge S.J."/>
            <person name="Gygi S.P."/>
        </authorList>
    </citation>
    <scope>PHOSPHORYLATION [LARGE SCALE ANALYSIS] AT SER-206; SER-212; THR-220; SER-750 AND THR-755</scope>
    <scope>IDENTIFICATION BY MASS SPECTROMETRY [LARGE SCALE ANALYSIS]</scope>
    <source>
        <tissue>Cervix carcinoma</tissue>
    </source>
</reference>
<reference key="8">
    <citation type="journal article" date="2009" name="Mol. Cell. Proteomics">
        <title>Large-scale proteomics analysis of the human kinome.</title>
        <authorList>
            <person name="Oppermann F.S."/>
            <person name="Gnad F."/>
            <person name="Olsen J.V."/>
            <person name="Hornberger R."/>
            <person name="Greff Z."/>
            <person name="Keri G."/>
            <person name="Mann M."/>
            <person name="Daub H."/>
        </authorList>
    </citation>
    <scope>PHOSPHORYLATION [LARGE SCALE ANALYSIS] AT SER-206; SER-212; SER-588 AND SER-750</scope>
    <scope>IDENTIFICATION BY MASS SPECTROMETRY [LARGE SCALE ANALYSIS]</scope>
</reference>
<reference key="9">
    <citation type="journal article" date="2009" name="Sci. Signal.">
        <title>Quantitative phosphoproteomic analysis of T cell receptor signaling reveals system-wide modulation of protein-protein interactions.</title>
        <authorList>
            <person name="Mayya V."/>
            <person name="Lundgren D.H."/>
            <person name="Hwang S.-I."/>
            <person name="Rezaul K."/>
            <person name="Wu L."/>
            <person name="Eng J.K."/>
            <person name="Rodionov V."/>
            <person name="Han D.K."/>
        </authorList>
    </citation>
    <scope>PHOSPHORYLATION [LARGE SCALE ANALYSIS] AT SER-206 AND SER-750</scope>
    <scope>IDENTIFICATION BY MASS SPECTROMETRY [LARGE SCALE ANALYSIS]</scope>
    <source>
        <tissue>Leukemic T-cell</tissue>
    </source>
</reference>
<reference key="10">
    <citation type="journal article" date="2009" name="Science">
        <title>Lysine acetylation targets protein complexes and co-regulates major cellular functions.</title>
        <authorList>
            <person name="Choudhary C."/>
            <person name="Kumar C."/>
            <person name="Gnad F."/>
            <person name="Nielsen M.L."/>
            <person name="Rehman M."/>
            <person name="Walther T.C."/>
            <person name="Olsen J.V."/>
            <person name="Mann M."/>
        </authorList>
    </citation>
    <scope>ACETYLATION [LARGE SCALE ANALYSIS] AT LYS-681</scope>
    <scope>IDENTIFICATION BY MASS SPECTROMETRY [LARGE SCALE ANALYSIS]</scope>
</reference>
<reference key="11">
    <citation type="journal article" date="2010" name="Sci. Signal.">
        <title>Quantitative phosphoproteomics reveals widespread full phosphorylation site occupancy during mitosis.</title>
        <authorList>
            <person name="Olsen J.V."/>
            <person name="Vermeulen M."/>
            <person name="Santamaria A."/>
            <person name="Kumar C."/>
            <person name="Miller M.L."/>
            <person name="Jensen L.J."/>
            <person name="Gnad F."/>
            <person name="Cox J."/>
            <person name="Jensen T.S."/>
            <person name="Nigg E.A."/>
            <person name="Brunak S."/>
            <person name="Mann M."/>
        </authorList>
    </citation>
    <scope>PHOSPHORYLATION [LARGE SCALE ANALYSIS] AT SER-206</scope>
    <scope>IDENTIFICATION BY MASS SPECTROMETRY [LARGE SCALE ANALYSIS]</scope>
    <source>
        <tissue>Cervix carcinoma</tissue>
    </source>
</reference>
<reference key="12">
    <citation type="journal article" date="2011" name="Mol. Cell">
        <title>The little elongation complex regulates small nuclear RNA transcription.</title>
        <authorList>
            <person name="Smith E.R."/>
            <person name="Lin C."/>
            <person name="Garrett A.S."/>
            <person name="Thornton J."/>
            <person name="Mohaghegh N."/>
            <person name="Hu D."/>
            <person name="Jackson J."/>
            <person name="Saraf A."/>
            <person name="Swanson S.K."/>
            <person name="Seidel C."/>
            <person name="Florens L."/>
            <person name="Washburn M.P."/>
            <person name="Eissenberg J.C."/>
            <person name="Shilatifard A."/>
        </authorList>
    </citation>
    <scope>IDENTIFICATION IN THE SEC COMPLEX</scope>
</reference>
<reference key="13">
    <citation type="journal article" date="2011" name="Sci. Signal.">
        <title>System-wide temporal characterization of the proteome and phosphoproteome of human embryonic stem cell differentiation.</title>
        <authorList>
            <person name="Rigbolt K.T."/>
            <person name="Prokhorova T.A."/>
            <person name="Akimov V."/>
            <person name="Henningsen J."/>
            <person name="Johansen P.T."/>
            <person name="Kratchmarova I."/>
            <person name="Kassem M."/>
            <person name="Mann M."/>
            <person name="Olsen J.V."/>
            <person name="Blagoev B."/>
        </authorList>
    </citation>
    <scope>PHOSPHORYLATION [LARGE SCALE ANALYSIS] AT THR-697</scope>
    <scope>IDENTIFICATION BY MASS SPECTROMETRY [LARGE SCALE ANALYSIS]</scope>
</reference>
<reference key="14">
    <citation type="journal article" date="2012" name="Nat. Rev. Mol. Cell Biol.">
        <title>The super elongation complex (SEC) family in transcriptional control.</title>
        <authorList>
            <person name="Luo Z."/>
            <person name="Lin C."/>
            <person name="Shilatifard A."/>
        </authorList>
    </citation>
    <scope>REVIEW ON THE SUPER ELONGATION COMPLEX</scope>
</reference>
<reference key="15">
    <citation type="journal article" date="2013" name="J. Proteome Res.">
        <title>Toward a comprehensive characterization of a human cancer cell phosphoproteome.</title>
        <authorList>
            <person name="Zhou H."/>
            <person name="Di Palma S."/>
            <person name="Preisinger C."/>
            <person name="Peng M."/>
            <person name="Polat A.N."/>
            <person name="Heck A.J."/>
            <person name="Mohammed S."/>
        </authorList>
    </citation>
    <scope>PHOSPHORYLATION [LARGE SCALE ANALYSIS] AT SER-588 AND SER-750</scope>
    <scope>IDENTIFICATION BY MASS SPECTROMETRY [LARGE SCALE ANALYSIS]</scope>
    <source>
        <tissue>Cervix carcinoma</tissue>
        <tissue>Erythroleukemia</tissue>
    </source>
</reference>
<reference key="16">
    <citation type="journal article" date="2013" name="Structure">
        <title>Leukemia fusion target AF9 is an intrinsically disordered transcriptional regulator that recruits multiple partners via coupled folding and binding.</title>
        <authorList>
            <person name="Leach B.I."/>
            <person name="Kuntimaddi A."/>
            <person name="Schmidt C.R."/>
            <person name="Cierpicki T."/>
            <person name="Johnson S.A."/>
            <person name="Bushweller J.H."/>
        </authorList>
    </citation>
    <scope>STRUCTURE BY NMR OF 738-779 IN COMPLEX WITH MLLT3</scope>
</reference>
<reference key="17">
    <citation type="journal article" date="2006" name="Science">
        <title>The consensus coding sequences of human breast and colorectal cancers.</title>
        <authorList>
            <person name="Sjoeblom T."/>
            <person name="Jones S."/>
            <person name="Wood L.D."/>
            <person name="Parsons D.W."/>
            <person name="Lin J."/>
            <person name="Barber T.D."/>
            <person name="Mandelker D."/>
            <person name="Leary R.J."/>
            <person name="Ptak J."/>
            <person name="Silliman N."/>
            <person name="Szabo S."/>
            <person name="Buckhaults P."/>
            <person name="Farrell C."/>
            <person name="Meeh P."/>
            <person name="Markowitz S.D."/>
            <person name="Willis J."/>
            <person name="Dawson D."/>
            <person name="Willson J.K.V."/>
            <person name="Gazdar A.F."/>
            <person name="Hartigan J."/>
            <person name="Wu L."/>
            <person name="Liu C."/>
            <person name="Parmigiani G."/>
            <person name="Park B.H."/>
            <person name="Bachman K.E."/>
            <person name="Papadopoulos N."/>
            <person name="Vogelstein B."/>
            <person name="Kinzler K.W."/>
            <person name="Velculescu V.E."/>
        </authorList>
    </citation>
    <scope>VARIANT [LARGE SCALE ANALYSIS] LYS-1204</scope>
</reference>
<feature type="chain" id="PRO_0000215910" description="AF4/FMR2 family member 1">
    <location>
        <begin position="1"/>
        <end position="1210"/>
    </location>
</feature>
<feature type="region of interest" description="Disordered" evidence="2">
    <location>
        <begin position="1"/>
        <end position="45"/>
    </location>
</feature>
<feature type="region of interest" description="Disordered" evidence="2">
    <location>
        <begin position="73"/>
        <end position="314"/>
    </location>
</feature>
<feature type="region of interest" description="Disordered" evidence="2">
    <location>
        <begin position="366"/>
        <end position="957"/>
    </location>
</feature>
<feature type="region of interest" description="Disordered" evidence="2">
    <location>
        <begin position="1098"/>
        <end position="1119"/>
    </location>
</feature>
<feature type="compositionally biased region" description="Basic and acidic residues" evidence="2">
    <location>
        <begin position="9"/>
        <end position="35"/>
    </location>
</feature>
<feature type="compositionally biased region" description="Basic and acidic residues" evidence="2">
    <location>
        <begin position="78"/>
        <end position="87"/>
    </location>
</feature>
<feature type="compositionally biased region" description="Polar residues" evidence="2">
    <location>
        <begin position="215"/>
        <end position="238"/>
    </location>
</feature>
<feature type="compositionally biased region" description="Basic and acidic residues" evidence="2">
    <location>
        <begin position="245"/>
        <end position="259"/>
    </location>
</feature>
<feature type="compositionally biased region" description="Pro residues" evidence="2">
    <location>
        <begin position="267"/>
        <end position="279"/>
    </location>
</feature>
<feature type="compositionally biased region" description="Polar residues" evidence="2">
    <location>
        <begin position="394"/>
        <end position="419"/>
    </location>
</feature>
<feature type="compositionally biased region" description="Acidic residues" evidence="2">
    <location>
        <begin position="423"/>
        <end position="439"/>
    </location>
</feature>
<feature type="compositionally biased region" description="Pro residues" evidence="2">
    <location>
        <begin position="442"/>
        <end position="453"/>
    </location>
</feature>
<feature type="compositionally biased region" description="Low complexity" evidence="2">
    <location>
        <begin position="454"/>
        <end position="472"/>
    </location>
</feature>
<feature type="compositionally biased region" description="Acidic residues" evidence="2">
    <location>
        <begin position="473"/>
        <end position="497"/>
    </location>
</feature>
<feature type="compositionally biased region" description="Basic and acidic residues" evidence="2">
    <location>
        <begin position="536"/>
        <end position="546"/>
    </location>
</feature>
<feature type="compositionally biased region" description="Polar residues" evidence="2">
    <location>
        <begin position="586"/>
        <end position="602"/>
    </location>
</feature>
<feature type="compositionally biased region" description="Basic and acidic residues" evidence="2">
    <location>
        <begin position="688"/>
        <end position="699"/>
    </location>
</feature>
<feature type="compositionally biased region" description="Polar residues" evidence="2">
    <location>
        <begin position="707"/>
        <end position="724"/>
    </location>
</feature>
<feature type="compositionally biased region" description="Basic and acidic residues" evidence="2">
    <location>
        <begin position="732"/>
        <end position="747"/>
    </location>
</feature>
<feature type="compositionally biased region" description="Basic and acidic residues" evidence="2">
    <location>
        <begin position="816"/>
        <end position="834"/>
    </location>
</feature>
<feature type="compositionally biased region" description="Low complexity" evidence="2">
    <location>
        <begin position="871"/>
        <end position="880"/>
    </location>
</feature>
<feature type="compositionally biased region" description="Basic and acidic residues" evidence="2">
    <location>
        <begin position="906"/>
        <end position="932"/>
    </location>
</feature>
<feature type="compositionally biased region" description="Low complexity" evidence="2">
    <location>
        <begin position="1110"/>
        <end position="1119"/>
    </location>
</feature>
<feature type="modified residue" description="Phosphoserine" evidence="1">
    <location>
        <position position="199"/>
    </location>
</feature>
<feature type="modified residue" description="Phosphoserine" evidence="9 10 11 13 14">
    <location>
        <position position="206"/>
    </location>
</feature>
<feature type="modified residue" description="Phosphoserine" evidence="9 10 11">
    <location>
        <position position="212"/>
    </location>
</feature>
<feature type="modified residue" description="Phosphothreonine" evidence="9">
    <location>
        <position position="220"/>
    </location>
</feature>
<feature type="modified residue" description="Phosphoserine" evidence="11 16">
    <location>
        <position position="588"/>
    </location>
</feature>
<feature type="modified residue" description="N6-acetyllysine" evidence="12">
    <location>
        <position position="681"/>
    </location>
</feature>
<feature type="modified residue" description="Phosphothreonine" evidence="10 15">
    <location>
        <position position="697"/>
    </location>
</feature>
<feature type="modified residue" description="Phosphoserine" evidence="9 11 13 16">
    <location>
        <position position="750"/>
    </location>
</feature>
<feature type="modified residue" description="Phosphothreonine" evidence="9">
    <location>
        <position position="755"/>
    </location>
</feature>
<feature type="splice variant" id="VSP_046095" description="In isoform 2." evidence="6">
    <original>MAAQS</original>
    <variation>MAFTERVNSSGN</variation>
    <location>
        <begin position="1"/>
        <end position="5"/>
    </location>
</feature>
<feature type="splice variant" id="VSP_046096" description="In isoform 2 and isoform 3." evidence="6 7">
    <original>A</original>
    <variation>AR</variation>
    <location>
        <position position="1096"/>
    </location>
</feature>
<feature type="sequence variant" id="VAR_020370" description="In dbSNP:rs3733378.">
    <original>P</original>
    <variation>A</variation>
    <location>
        <position position="209"/>
    </location>
</feature>
<feature type="sequence variant" id="VAR_036130" description="In a breast cancer sample; somatic mutation." evidence="3">
    <original>Q</original>
    <variation>K</variation>
    <location>
        <position position="1204"/>
    </location>
</feature>
<feature type="sequence conflict" description="In Ref. 2; AAA36642." evidence="8" ref="2">
    <original>K</original>
    <variation>R</variation>
    <location>
        <position position="46"/>
    </location>
</feature>
<feature type="sequence conflict" description="In Ref. 2; AAA36642." evidence="8" ref="2">
    <original>E</original>
    <variation>G</variation>
    <location>
        <position position="624"/>
    </location>
</feature>
<feature type="sequence conflict" description="In Ref. 3; BAG62103." evidence="8" ref="3">
    <original>M</original>
    <variation>V</variation>
    <location>
        <position position="762"/>
    </location>
</feature>
<feature type="sequence conflict" description="In Ref. 3; BAG62103." evidence="8" ref="3">
    <original>R</original>
    <variation>G</variation>
    <location>
        <position position="820"/>
    </location>
</feature>
<feature type="sequence conflict" description="In Ref. 2; AAA36642." evidence="8" ref="2">
    <original>SASSTKS</original>
    <variation>VPAVPRV</variation>
    <location>
        <begin position="899"/>
        <end position="905"/>
    </location>
</feature>
<feature type="sequence conflict" description="In Ref. 2; AAA36642." evidence="8" ref="2">
    <original>EH</original>
    <variation>AD</variation>
    <location>
        <begin position="928"/>
        <end position="929"/>
    </location>
</feature>
<feature type="sequence conflict" description="In Ref. 2; AAA36642." evidence="8" ref="2">
    <original>I</original>
    <variation>N</variation>
    <location>
        <position position="999"/>
    </location>
</feature>
<feature type="sequence conflict" description="In Ref. 2; AAA36642." evidence="8" ref="2">
    <original>N</original>
    <variation>I</variation>
    <location>
        <position position="1140"/>
    </location>
</feature>
<feature type="turn" evidence="17">
    <location>
        <begin position="768"/>
        <end position="770"/>
    </location>
</feature>
<protein>
    <recommendedName>
        <fullName>AF4/FMR2 family member 1</fullName>
    </recommendedName>
    <alternativeName>
        <fullName>ALL1-fused gene from chromosome 4 protein</fullName>
        <shortName>Protein AF-4</shortName>
    </alternativeName>
    <alternativeName>
        <fullName>Protein FEL</fullName>
    </alternativeName>
    <alternativeName>
        <fullName>Proto-oncogene AF4</fullName>
    </alternativeName>
</protein>
<dbReference type="EMBL" id="L13773">
    <property type="protein sequence ID" value="AAA58360.1"/>
    <property type="molecule type" value="mRNA"/>
</dbReference>
<dbReference type="EMBL" id="L25050">
    <property type="protein sequence ID" value="AAA36642.1"/>
    <property type="status" value="ALT_FRAME"/>
    <property type="molecule type" value="mRNA"/>
</dbReference>
<dbReference type="EMBL" id="AK300364">
    <property type="protein sequence ID" value="BAG62103.1"/>
    <property type="molecule type" value="mRNA"/>
</dbReference>
<dbReference type="EMBL" id="AC092658">
    <property type="status" value="NOT_ANNOTATED_CDS"/>
    <property type="molecule type" value="Genomic_DNA"/>
</dbReference>
<dbReference type="EMBL" id="AC093779">
    <property type="status" value="NOT_ANNOTATED_CDS"/>
    <property type="molecule type" value="Genomic_DNA"/>
</dbReference>
<dbReference type="EMBL" id="AC093827">
    <property type="status" value="NOT_ANNOTATED_CDS"/>
    <property type="molecule type" value="Genomic_DNA"/>
</dbReference>
<dbReference type="CCDS" id="CCDS3616.1">
    <molecule id="P51825-1"/>
</dbReference>
<dbReference type="CCDS" id="CCDS54775.1">
    <molecule id="P51825-2"/>
</dbReference>
<dbReference type="CCDS" id="CCDS93557.1">
    <molecule id="P51825-3"/>
</dbReference>
<dbReference type="PIR" id="A58198">
    <property type="entry name" value="A58198"/>
</dbReference>
<dbReference type="PIR" id="I39410">
    <property type="entry name" value="I39410"/>
</dbReference>
<dbReference type="RefSeq" id="NP_001160165.1">
    <molecule id="P51825-2"/>
    <property type="nucleotide sequence ID" value="NM_001166693.3"/>
</dbReference>
<dbReference type="RefSeq" id="NP_001300888.1">
    <molecule id="P51825-3"/>
    <property type="nucleotide sequence ID" value="NM_001313959.2"/>
</dbReference>
<dbReference type="RefSeq" id="NP_001300889.1">
    <property type="nucleotide sequence ID" value="NM_001313960.1"/>
</dbReference>
<dbReference type="RefSeq" id="NP_005926.1">
    <molecule id="P51825-1"/>
    <property type="nucleotide sequence ID" value="NM_005935.4"/>
</dbReference>
<dbReference type="RefSeq" id="XP_005263064.1">
    <molecule id="P51825-2"/>
    <property type="nucleotide sequence ID" value="XM_005263007.4"/>
</dbReference>
<dbReference type="RefSeq" id="XP_011530275.1">
    <molecule id="P51825-2"/>
    <property type="nucleotide sequence ID" value="XM_011531973.4"/>
</dbReference>
<dbReference type="RefSeq" id="XP_054206027.1">
    <molecule id="P51825-2"/>
    <property type="nucleotide sequence ID" value="XM_054350052.1"/>
</dbReference>
<dbReference type="RefSeq" id="XP_054206028.1">
    <molecule id="P51825-2"/>
    <property type="nucleotide sequence ID" value="XM_054350053.1"/>
</dbReference>
<dbReference type="PDB" id="2LM0">
    <property type="method" value="NMR"/>
    <property type="chains" value="A=738-779"/>
</dbReference>
<dbReference type="PDBsum" id="2LM0"/>
<dbReference type="SMR" id="P51825"/>
<dbReference type="BioGRID" id="110445">
    <property type="interactions" value="69"/>
</dbReference>
<dbReference type="CORUM" id="P51825"/>
<dbReference type="DIP" id="DIP-56407N"/>
<dbReference type="FunCoup" id="P51825">
    <property type="interactions" value="1168"/>
</dbReference>
<dbReference type="IntAct" id="P51825">
    <property type="interactions" value="37"/>
</dbReference>
<dbReference type="MINT" id="P51825"/>
<dbReference type="STRING" id="9606.ENSP00000378578"/>
<dbReference type="GlyGen" id="P51825">
    <property type="glycosylation" value="1 site"/>
</dbReference>
<dbReference type="iPTMnet" id="P51825"/>
<dbReference type="PhosphoSitePlus" id="P51825"/>
<dbReference type="BioMuta" id="AFF1"/>
<dbReference type="DMDM" id="1703194"/>
<dbReference type="jPOST" id="P51825"/>
<dbReference type="MassIVE" id="P51825"/>
<dbReference type="PaxDb" id="9606-ENSP00000378578"/>
<dbReference type="PeptideAtlas" id="P51825"/>
<dbReference type="ProteomicsDB" id="19254"/>
<dbReference type="ProteomicsDB" id="56427">
    <molecule id="P51825-1"/>
</dbReference>
<dbReference type="Pumba" id="P51825"/>
<dbReference type="Antibodypedia" id="25387">
    <property type="antibodies" value="264 antibodies from 31 providers"/>
</dbReference>
<dbReference type="DNASU" id="4299"/>
<dbReference type="Ensembl" id="ENST00000307808.10">
    <molecule id="P51825-1"/>
    <property type="protein sequence ID" value="ENSP00000305689.6"/>
    <property type="gene ID" value="ENSG00000172493.23"/>
</dbReference>
<dbReference type="Ensembl" id="ENST00000395146.9">
    <molecule id="P51825-2"/>
    <property type="protein sequence ID" value="ENSP00000378578.4"/>
    <property type="gene ID" value="ENSG00000172493.23"/>
</dbReference>
<dbReference type="Ensembl" id="ENST00000544085.6">
    <molecule id="P51825-3"/>
    <property type="protein sequence ID" value="ENSP00000440843.3"/>
    <property type="gene ID" value="ENSG00000172493.23"/>
</dbReference>
<dbReference type="GeneID" id="4299"/>
<dbReference type="KEGG" id="hsa:4299"/>
<dbReference type="MANE-Select" id="ENST00000395146.9">
    <molecule id="P51825-2"/>
    <property type="protein sequence ID" value="ENSP00000378578.4"/>
    <property type="RefSeq nucleotide sequence ID" value="NM_001166693.3"/>
    <property type="RefSeq protein sequence ID" value="NP_001160165.1"/>
</dbReference>
<dbReference type="UCSC" id="uc003hqj.5">
    <molecule id="P51825-1"/>
    <property type="organism name" value="human"/>
</dbReference>
<dbReference type="AGR" id="HGNC:7135"/>
<dbReference type="CTD" id="4299"/>
<dbReference type="DisGeNET" id="4299"/>
<dbReference type="GeneCards" id="AFF1"/>
<dbReference type="HGNC" id="HGNC:7135">
    <property type="gene designation" value="AFF1"/>
</dbReference>
<dbReference type="HPA" id="ENSG00000172493">
    <property type="expression patterns" value="Low tissue specificity"/>
</dbReference>
<dbReference type="MalaCards" id="AFF1"/>
<dbReference type="MIM" id="159557">
    <property type="type" value="gene"/>
</dbReference>
<dbReference type="neXtProt" id="NX_P51825"/>
<dbReference type="OpenTargets" id="ENSG00000172493"/>
<dbReference type="Orphanet" id="589595">
    <property type="disease" value="Mixed phenotype acute leukemia with t(v;11q23.3)"/>
</dbReference>
<dbReference type="PharmGKB" id="PA30851"/>
<dbReference type="VEuPathDB" id="HostDB:ENSG00000172493"/>
<dbReference type="eggNOG" id="ENOG502QVDA">
    <property type="taxonomic scope" value="Eukaryota"/>
</dbReference>
<dbReference type="GeneTree" id="ENSGT00950000182974"/>
<dbReference type="HOGENOM" id="CLU_006484_0_0_1"/>
<dbReference type="InParanoid" id="P51825"/>
<dbReference type="OMA" id="KFTMSLK"/>
<dbReference type="OrthoDB" id="6382204at2759"/>
<dbReference type="PAN-GO" id="P51825">
    <property type="GO annotations" value="2 GO annotations based on evolutionary models"/>
</dbReference>
<dbReference type="PhylomeDB" id="P51825"/>
<dbReference type="TreeFam" id="TF326216"/>
<dbReference type="PathwayCommons" id="P51825"/>
<dbReference type="SignaLink" id="P51825"/>
<dbReference type="SIGNOR" id="P51825"/>
<dbReference type="BioGRID-ORCS" id="4299">
    <property type="hits" value="21 hits in 1166 CRISPR screens"/>
</dbReference>
<dbReference type="ChiTaRS" id="AFF1">
    <property type="organism name" value="human"/>
</dbReference>
<dbReference type="GeneWiki" id="AFF1"/>
<dbReference type="GenomeRNAi" id="4299"/>
<dbReference type="Pharos" id="P51825">
    <property type="development level" value="Tbio"/>
</dbReference>
<dbReference type="PRO" id="PR:P51825"/>
<dbReference type="Proteomes" id="UP000005640">
    <property type="component" value="Chromosome 4"/>
</dbReference>
<dbReference type="RNAct" id="P51825">
    <property type="molecule type" value="protein"/>
</dbReference>
<dbReference type="Bgee" id="ENSG00000172493">
    <property type="expression patterns" value="Expressed in choroid plexus epithelium and 215 other cell types or tissues"/>
</dbReference>
<dbReference type="ExpressionAtlas" id="P51825">
    <property type="expression patterns" value="baseline and differential"/>
</dbReference>
<dbReference type="GO" id="GO:0032783">
    <property type="term" value="C:super elongation complex"/>
    <property type="evidence" value="ECO:0000318"/>
    <property type="project" value="GO_Central"/>
</dbReference>
<dbReference type="GO" id="GO:0008023">
    <property type="term" value="C:transcription elongation factor complex"/>
    <property type="evidence" value="ECO:0000314"/>
    <property type="project" value="UniProtKB"/>
</dbReference>
<dbReference type="GO" id="GO:0010468">
    <property type="term" value="P:regulation of gene expression"/>
    <property type="evidence" value="ECO:0000318"/>
    <property type="project" value="GO_Central"/>
</dbReference>
<dbReference type="DisProt" id="DP02349"/>
<dbReference type="Gene3D" id="6.10.250.2670">
    <property type="match status" value="1"/>
</dbReference>
<dbReference type="IDEAL" id="IID00554"/>
<dbReference type="InterPro" id="IPR007797">
    <property type="entry name" value="AF4/FMR2"/>
</dbReference>
<dbReference type="InterPro" id="IPR043640">
    <property type="entry name" value="AF4/FMR2_CHD"/>
</dbReference>
<dbReference type="InterPro" id="IPR043639">
    <property type="entry name" value="AF4_int"/>
</dbReference>
<dbReference type="PANTHER" id="PTHR10528">
    <property type="entry name" value="AF4/FMR2 FAMILY MEMBER"/>
    <property type="match status" value="1"/>
</dbReference>
<dbReference type="PANTHER" id="PTHR10528:SF6">
    <property type="entry name" value="AF4_FMR2 FAMILY MEMBER 1"/>
    <property type="match status" value="1"/>
</dbReference>
<dbReference type="Pfam" id="PF05110">
    <property type="entry name" value="AF-4"/>
    <property type="match status" value="1"/>
</dbReference>
<dbReference type="Pfam" id="PF18875">
    <property type="entry name" value="AF4_int"/>
    <property type="match status" value="1"/>
</dbReference>
<dbReference type="Pfam" id="PF18876">
    <property type="entry name" value="AFF4_CHD"/>
    <property type="match status" value="1"/>
</dbReference>
<accession>P51825</accession>
<accession>B4DTU1</accession>
<accession>E9PBM3</accession>
<organism>
    <name type="scientific">Homo sapiens</name>
    <name type="common">Human</name>
    <dbReference type="NCBI Taxonomy" id="9606"/>
    <lineage>
        <taxon>Eukaryota</taxon>
        <taxon>Metazoa</taxon>
        <taxon>Chordata</taxon>
        <taxon>Craniata</taxon>
        <taxon>Vertebrata</taxon>
        <taxon>Euteleostomi</taxon>
        <taxon>Mammalia</taxon>
        <taxon>Eutheria</taxon>
        <taxon>Euarchontoglires</taxon>
        <taxon>Primates</taxon>
        <taxon>Haplorrhini</taxon>
        <taxon>Catarrhini</taxon>
        <taxon>Hominidae</taxon>
        <taxon>Homo</taxon>
    </lineage>
</organism>
<keyword id="KW-0002">3D-structure</keyword>
<keyword id="KW-0007">Acetylation</keyword>
<keyword id="KW-0025">Alternative splicing</keyword>
<keyword id="KW-0160">Chromosomal rearrangement</keyword>
<keyword id="KW-0539">Nucleus</keyword>
<keyword id="KW-0597">Phosphoprotein</keyword>
<keyword id="KW-1267">Proteomics identification</keyword>
<keyword id="KW-0656">Proto-oncogene</keyword>
<keyword id="KW-1185">Reference proteome</keyword>
<gene>
    <name type="primary">AFF1</name>
    <name type="synonym">AF4</name>
    <name type="synonym">FEL</name>
    <name type="synonym">MLLT2</name>
    <name type="synonym">PBM1</name>
</gene>